<reference key="1">
    <citation type="submission" date="2009-02" db="EMBL/GenBank/DDBJ databases">
        <title>Vibrio splendidus str. LGP32 complete genome.</title>
        <authorList>
            <person name="Mazel D."/>
            <person name="Le Roux F."/>
        </authorList>
    </citation>
    <scope>NUCLEOTIDE SEQUENCE [LARGE SCALE GENOMIC DNA]</scope>
    <source>
        <strain>LGP32</strain>
    </source>
</reference>
<keyword id="KW-0687">Ribonucleoprotein</keyword>
<keyword id="KW-0689">Ribosomal protein</keyword>
<name>RS16_VIBA3</name>
<gene>
    <name evidence="1" type="primary">rpsP</name>
    <name type="ordered locus">VS_2558</name>
</gene>
<proteinExistence type="inferred from homology"/>
<dbReference type="EMBL" id="FM954972">
    <property type="protein sequence ID" value="CAV19737.1"/>
    <property type="molecule type" value="Genomic_DNA"/>
</dbReference>
<dbReference type="SMR" id="B7VK29"/>
<dbReference type="STRING" id="575788.VS_2558"/>
<dbReference type="KEGG" id="vsp:VS_2558"/>
<dbReference type="eggNOG" id="COG0228">
    <property type="taxonomic scope" value="Bacteria"/>
</dbReference>
<dbReference type="HOGENOM" id="CLU_100590_5_1_6"/>
<dbReference type="Proteomes" id="UP000009100">
    <property type="component" value="Chromosome 1"/>
</dbReference>
<dbReference type="GO" id="GO:0005737">
    <property type="term" value="C:cytoplasm"/>
    <property type="evidence" value="ECO:0007669"/>
    <property type="project" value="UniProtKB-ARBA"/>
</dbReference>
<dbReference type="GO" id="GO:0015935">
    <property type="term" value="C:small ribosomal subunit"/>
    <property type="evidence" value="ECO:0007669"/>
    <property type="project" value="TreeGrafter"/>
</dbReference>
<dbReference type="GO" id="GO:0003735">
    <property type="term" value="F:structural constituent of ribosome"/>
    <property type="evidence" value="ECO:0007669"/>
    <property type="project" value="InterPro"/>
</dbReference>
<dbReference type="GO" id="GO:0006412">
    <property type="term" value="P:translation"/>
    <property type="evidence" value="ECO:0007669"/>
    <property type="project" value="UniProtKB-UniRule"/>
</dbReference>
<dbReference type="FunFam" id="3.30.1320.10:FF:000001">
    <property type="entry name" value="30S ribosomal protein S16"/>
    <property type="match status" value="1"/>
</dbReference>
<dbReference type="Gene3D" id="3.30.1320.10">
    <property type="match status" value="1"/>
</dbReference>
<dbReference type="HAMAP" id="MF_00385">
    <property type="entry name" value="Ribosomal_bS16"/>
    <property type="match status" value="1"/>
</dbReference>
<dbReference type="InterPro" id="IPR000307">
    <property type="entry name" value="Ribosomal_bS16"/>
</dbReference>
<dbReference type="InterPro" id="IPR020592">
    <property type="entry name" value="Ribosomal_bS16_CS"/>
</dbReference>
<dbReference type="InterPro" id="IPR023803">
    <property type="entry name" value="Ribosomal_bS16_dom_sf"/>
</dbReference>
<dbReference type="NCBIfam" id="TIGR00002">
    <property type="entry name" value="S16"/>
    <property type="match status" value="1"/>
</dbReference>
<dbReference type="PANTHER" id="PTHR12919">
    <property type="entry name" value="30S RIBOSOMAL PROTEIN S16"/>
    <property type="match status" value="1"/>
</dbReference>
<dbReference type="PANTHER" id="PTHR12919:SF20">
    <property type="entry name" value="SMALL RIBOSOMAL SUBUNIT PROTEIN BS16M"/>
    <property type="match status" value="1"/>
</dbReference>
<dbReference type="Pfam" id="PF00886">
    <property type="entry name" value="Ribosomal_S16"/>
    <property type="match status" value="1"/>
</dbReference>
<dbReference type="SUPFAM" id="SSF54565">
    <property type="entry name" value="Ribosomal protein S16"/>
    <property type="match status" value="1"/>
</dbReference>
<dbReference type="PROSITE" id="PS00732">
    <property type="entry name" value="RIBOSOMAL_S16"/>
    <property type="match status" value="1"/>
</dbReference>
<protein>
    <recommendedName>
        <fullName evidence="1">Small ribosomal subunit protein bS16</fullName>
    </recommendedName>
    <alternativeName>
        <fullName evidence="2">30S ribosomal protein S16</fullName>
    </alternativeName>
</protein>
<evidence type="ECO:0000255" key="1">
    <source>
        <dbReference type="HAMAP-Rule" id="MF_00385"/>
    </source>
</evidence>
<evidence type="ECO:0000305" key="2"/>
<accession>B7VK29</accession>
<feature type="chain" id="PRO_1000134335" description="Small ribosomal subunit protein bS16">
    <location>
        <begin position="1"/>
        <end position="82"/>
    </location>
</feature>
<organism>
    <name type="scientific">Vibrio atlanticus (strain LGP32)</name>
    <name type="common">Vibrio splendidus (strain Mel32)</name>
    <dbReference type="NCBI Taxonomy" id="575788"/>
    <lineage>
        <taxon>Bacteria</taxon>
        <taxon>Pseudomonadati</taxon>
        <taxon>Pseudomonadota</taxon>
        <taxon>Gammaproteobacteria</taxon>
        <taxon>Vibrionales</taxon>
        <taxon>Vibrionaceae</taxon>
        <taxon>Vibrio</taxon>
    </lineage>
</organism>
<comment type="similarity">
    <text evidence="1">Belongs to the bacterial ribosomal protein bS16 family.</text>
</comment>
<sequence>MVTIRLARHGAKKRPFYQIVVADSRNSVTGRFIEKVGFFNPTAQGQEEGLRLDLDRVNHWVGQGASLSDRVAKLVKDAQKAA</sequence>